<organism>
    <name type="scientific">Mus musculus</name>
    <name type="common">Mouse</name>
    <dbReference type="NCBI Taxonomy" id="10090"/>
    <lineage>
        <taxon>Eukaryota</taxon>
        <taxon>Metazoa</taxon>
        <taxon>Chordata</taxon>
        <taxon>Craniata</taxon>
        <taxon>Vertebrata</taxon>
        <taxon>Euteleostomi</taxon>
        <taxon>Mammalia</taxon>
        <taxon>Eutheria</taxon>
        <taxon>Euarchontoglires</taxon>
        <taxon>Glires</taxon>
        <taxon>Rodentia</taxon>
        <taxon>Myomorpha</taxon>
        <taxon>Muroidea</taxon>
        <taxon>Muridae</taxon>
        <taxon>Murinae</taxon>
        <taxon>Mus</taxon>
        <taxon>Mus</taxon>
    </lineage>
</organism>
<evidence type="ECO:0000250" key="1"/>
<evidence type="ECO:0000255" key="2"/>
<evidence type="ECO:0000255" key="3">
    <source>
        <dbReference type="PROSITE-ProRule" id="PRU01082"/>
    </source>
</evidence>
<evidence type="ECO:0000269" key="4">
    <source>
    </source>
</evidence>
<evidence type="ECO:0000269" key="5">
    <source>
    </source>
</evidence>
<evidence type="ECO:0000269" key="6">
    <source>
    </source>
</evidence>
<evidence type="ECO:0000303" key="7">
    <source>
    </source>
</evidence>
<evidence type="ECO:0000305" key="8"/>
<sequence>MIEDTMTLLSLLGRIMRYFLLRPETLFLLCISLALWSYFFHTDEVKTIVKSSRDAVKMVKGKVAEIMQNDRLGGLDVLEAEFSKTWEFKSHNVAVYSIQGRRDHMEDRFEVLTDLANKTHPSIFGIFDGHGGETAAEYVKSRLPEALKQHLQDYEKDKENSVLTYQTILEQQILSIDREMLEKLTVSYDEAGTTCLIALLSDKDLTVANVGDSRGVLCDKDGNAIPLSHDHKPYQLKERKRIKRAGGFISFNGSWRVQGILAMSRSLGDYPLKNLNVVIPDPDILTFDLDKLQPEFMILASDGLWDAFSNEEAVRFIKERLDEPHFGAKSIVLQSFYRGCPDNITVMVVKFRNSSKTEEH</sequence>
<protein>
    <recommendedName>
        <fullName>Protein phosphatase 1L</fullName>
        <ecNumber>3.1.3.16</ecNumber>
    </recommendedName>
    <alternativeName>
        <fullName>Protein phosphatase 1-like</fullName>
    </alternativeName>
    <alternativeName>
        <fullName>Protein phosphatase 2C isoform epsilon</fullName>
        <shortName>PP2C-epsilon</shortName>
    </alternativeName>
</protein>
<keyword id="KW-0025">Alternative splicing</keyword>
<keyword id="KW-0378">Hydrolase</keyword>
<keyword id="KW-0460">Magnesium</keyword>
<keyword id="KW-0464">Manganese</keyword>
<keyword id="KW-0472">Membrane</keyword>
<keyword id="KW-0479">Metal-binding</keyword>
<keyword id="KW-0904">Protein phosphatase</keyword>
<keyword id="KW-1185">Reference proteome</keyword>
<keyword id="KW-0812">Transmembrane</keyword>
<keyword id="KW-1133">Transmembrane helix</keyword>
<feature type="chain" id="PRO_0000057755" description="Protein phosphatase 1L">
    <location>
        <begin position="1"/>
        <end position="360"/>
    </location>
</feature>
<feature type="topological domain" description="Extracellular" evidence="2">
    <location>
        <begin position="1"/>
        <end position="25"/>
    </location>
</feature>
<feature type="transmembrane region" description="Helical" evidence="2">
    <location>
        <begin position="26"/>
        <end position="42"/>
    </location>
</feature>
<feature type="topological domain" description="Cytoplasmic" evidence="2">
    <location>
        <begin position="43"/>
        <end position="360"/>
    </location>
</feature>
<feature type="domain" description="PPM-type phosphatase" evidence="3">
    <location>
        <begin position="92"/>
        <end position="351"/>
    </location>
</feature>
<feature type="binding site" evidence="1">
    <location>
        <position position="128"/>
    </location>
    <ligand>
        <name>Mn(2+)</name>
        <dbReference type="ChEBI" id="CHEBI:29035"/>
        <label>1</label>
    </ligand>
</feature>
<feature type="binding site" evidence="1">
    <location>
        <position position="128"/>
    </location>
    <ligand>
        <name>Mn(2+)</name>
        <dbReference type="ChEBI" id="CHEBI:29035"/>
        <label>2</label>
    </ligand>
</feature>
<feature type="binding site" evidence="1">
    <location>
        <position position="129"/>
    </location>
    <ligand>
        <name>Mn(2+)</name>
        <dbReference type="ChEBI" id="CHEBI:29035"/>
        <label>1</label>
    </ligand>
</feature>
<feature type="binding site" evidence="1">
    <location>
        <position position="302"/>
    </location>
    <ligand>
        <name>Mn(2+)</name>
        <dbReference type="ChEBI" id="CHEBI:29035"/>
        <label>2</label>
    </ligand>
</feature>
<feature type="binding site" evidence="1">
    <location>
        <position position="342"/>
    </location>
    <ligand>
        <name>Mn(2+)</name>
        <dbReference type="ChEBI" id="CHEBI:29035"/>
        <label>2</label>
    </ligand>
</feature>
<feature type="splice variant" id="VSP_016928" description="In isoform 2." evidence="7">
    <location>
        <begin position="1"/>
        <end position="105"/>
    </location>
</feature>
<feature type="splice variant" id="VSP_016929" description="In isoform 2." evidence="7">
    <original>EDRFEVLTDLANKTHPSIFGIFDGHGGE</original>
    <variation>MPTEQPEVPSQSLEAVEKGSLSSEDAGL</variation>
    <location>
        <begin position="106"/>
        <end position="133"/>
    </location>
</feature>
<feature type="mutagenesis site" description="Abolishes phosphatase activity." evidence="4">
    <original>H</original>
    <variation>L</variation>
    <location>
        <position position="130"/>
    </location>
</feature>
<feature type="mutagenesis site" description="Slightly abolishes phosphatase activity." evidence="4">
    <original>R</original>
    <variation>G</variation>
    <location>
        <position position="239"/>
    </location>
</feature>
<feature type="mutagenesis site" description="Abolishes phosphatase activity." evidence="4">
    <original>R</original>
    <variation>G</variation>
    <location>
        <position position="241"/>
    </location>
</feature>
<feature type="mutagenesis site" description="Abolishes phosphatase activity." evidence="4">
    <original>R</original>
    <variation>A</variation>
    <location>
        <position position="265"/>
    </location>
</feature>
<feature type="mutagenesis site" description="Abolishes phosphatase activity, prevents MAP3K7/TAK1 phosphorylation in vitro, does not abolish interaction with MAP3K7/TAK1, found in a complex with MAP3K7/TAK1, MAP2K4 or MAP2K6 and enhances the association between MAP3K7/TAK1, MAP2K4 or MAP2K6." evidence="4">
    <original>D</original>
    <variation>A</variation>
    <location>
        <position position="302"/>
    </location>
</feature>
<feature type="sequence conflict" description="In Ref. 1." evidence="8" ref="1">
    <original>T</original>
    <variation>I</variation>
    <location>
        <position position="5"/>
    </location>
</feature>
<feature type="sequence conflict" description="In Ref. 2; BAC27913." evidence="8" ref="2">
    <original>S</original>
    <variation>Y</variation>
    <location>
        <position position="51"/>
    </location>
</feature>
<feature type="sequence conflict" description="In Ref. 1; AAO43055." evidence="8" ref="1">
    <original>K</original>
    <variation>E</variation>
    <location>
        <position position="89"/>
    </location>
</feature>
<feature type="sequence conflict" description="In Ref. 5; AAD17235." evidence="8" ref="5">
    <original>A</original>
    <variation>P</variation>
    <location>
        <position position="198"/>
    </location>
</feature>
<feature type="sequence conflict" description="In Ref. 5; AAD17235." evidence="8" ref="5">
    <original>L</original>
    <variation>P</variation>
    <location>
        <position position="236"/>
    </location>
</feature>
<feature type="sequence conflict" description="In Ref. 2; BAE28196." evidence="8" ref="2">
    <original>V</original>
    <variation>I</variation>
    <location>
        <position position="332"/>
    </location>
</feature>
<dbReference type="EC" id="3.1.3.16"/>
<dbReference type="EMBL" id="AY184801">
    <property type="protein sequence ID" value="AAO43055.1"/>
    <property type="status" value="ALT_INIT"/>
    <property type="molecule type" value="mRNA"/>
</dbReference>
<dbReference type="EMBL" id="AK028275">
    <property type="protein sequence ID" value="BAC25853.1"/>
    <property type="molecule type" value="mRNA"/>
</dbReference>
<dbReference type="EMBL" id="AK032529">
    <property type="protein sequence ID" value="BAC27913.1"/>
    <property type="molecule type" value="mRNA"/>
</dbReference>
<dbReference type="EMBL" id="AK035912">
    <property type="protein sequence ID" value="BAC29241.1"/>
    <property type="molecule type" value="mRNA"/>
</dbReference>
<dbReference type="EMBL" id="AK045724">
    <property type="protein sequence ID" value="BAC32472.1"/>
    <property type="molecule type" value="mRNA"/>
</dbReference>
<dbReference type="EMBL" id="AK131646">
    <property type="protein sequence ID" value="BAE20738.1"/>
    <property type="molecule type" value="mRNA"/>
</dbReference>
<dbReference type="EMBL" id="AK147876">
    <property type="protein sequence ID" value="BAE28196.1"/>
    <property type="molecule type" value="mRNA"/>
</dbReference>
<dbReference type="EMBL" id="AK220523">
    <property type="protein sequence ID" value="BAD90308.1"/>
    <property type="molecule type" value="mRNA"/>
</dbReference>
<dbReference type="EMBL" id="BC096031">
    <property type="protein sequence ID" value="AAH96031.1"/>
    <property type="molecule type" value="mRNA"/>
</dbReference>
<dbReference type="EMBL" id="AF117832">
    <property type="protein sequence ID" value="AAD17235.1"/>
    <property type="molecule type" value="mRNA"/>
</dbReference>
<dbReference type="CCDS" id="CCDS17405.1">
    <molecule id="Q8BHN0-1"/>
</dbReference>
<dbReference type="RefSeq" id="NP_848841.2">
    <molecule id="Q8BHN0-1"/>
    <property type="nucleotide sequence ID" value="NM_178726.3"/>
</dbReference>
<dbReference type="SMR" id="Q8BHN0"/>
<dbReference type="BioGRID" id="232372">
    <property type="interactions" value="4"/>
</dbReference>
<dbReference type="FunCoup" id="Q8BHN0">
    <property type="interactions" value="701"/>
</dbReference>
<dbReference type="IntAct" id="Q8BHN0">
    <property type="interactions" value="5"/>
</dbReference>
<dbReference type="MINT" id="Q8BHN0"/>
<dbReference type="STRING" id="10090.ENSMUSP00000029355"/>
<dbReference type="GlyGen" id="Q8BHN0">
    <property type="glycosylation" value="3 sites, 3 N-linked glycans (3 sites)"/>
</dbReference>
<dbReference type="iPTMnet" id="Q8BHN0"/>
<dbReference type="PhosphoSitePlus" id="Q8BHN0"/>
<dbReference type="PaxDb" id="10090-ENSMUSP00000029355"/>
<dbReference type="PeptideAtlas" id="Q8BHN0"/>
<dbReference type="ProteomicsDB" id="289739">
    <molecule id="Q8BHN0-1"/>
</dbReference>
<dbReference type="ProteomicsDB" id="289740">
    <molecule id="Q8BHN0-2"/>
</dbReference>
<dbReference type="Pumba" id="Q8BHN0"/>
<dbReference type="Antibodypedia" id="18529">
    <property type="antibodies" value="147 antibodies from 28 providers"/>
</dbReference>
<dbReference type="DNASU" id="242083"/>
<dbReference type="Ensembl" id="ENSMUST00000029355.9">
    <molecule id="Q8BHN0-1"/>
    <property type="protein sequence ID" value="ENSMUSP00000029355.7"/>
    <property type="gene ID" value="ENSMUSG00000027784.11"/>
</dbReference>
<dbReference type="GeneID" id="242083"/>
<dbReference type="KEGG" id="mmu:242083"/>
<dbReference type="UCSC" id="uc008pmg.1">
    <molecule id="Q8BHN0-1"/>
    <property type="organism name" value="mouse"/>
</dbReference>
<dbReference type="UCSC" id="uc008pmh.1">
    <molecule id="Q8BHN0-2"/>
    <property type="organism name" value="mouse"/>
</dbReference>
<dbReference type="AGR" id="MGI:2139740"/>
<dbReference type="CTD" id="151742"/>
<dbReference type="MGI" id="MGI:2139740">
    <property type="gene designation" value="Ppm1l"/>
</dbReference>
<dbReference type="VEuPathDB" id="HostDB:ENSMUSG00000027784"/>
<dbReference type="eggNOG" id="KOG0698">
    <property type="taxonomic scope" value="Eukaryota"/>
</dbReference>
<dbReference type="GeneTree" id="ENSGT00940000157030"/>
<dbReference type="HOGENOM" id="CLU_013173_11_0_1"/>
<dbReference type="InParanoid" id="Q8BHN0"/>
<dbReference type="OMA" id="IDDQEAC"/>
<dbReference type="OrthoDB" id="343114at2759"/>
<dbReference type="PhylomeDB" id="Q8BHN0"/>
<dbReference type="TreeFam" id="TF332888"/>
<dbReference type="BioGRID-ORCS" id="242083">
    <property type="hits" value="2 hits in 81 CRISPR screens"/>
</dbReference>
<dbReference type="ChiTaRS" id="Ppm1l">
    <property type="organism name" value="mouse"/>
</dbReference>
<dbReference type="PRO" id="PR:Q8BHN0"/>
<dbReference type="Proteomes" id="UP000000589">
    <property type="component" value="Chromosome 3"/>
</dbReference>
<dbReference type="RNAct" id="Q8BHN0">
    <property type="molecule type" value="protein"/>
</dbReference>
<dbReference type="Bgee" id="ENSMUSG00000027784">
    <property type="expression patterns" value="Expressed in otolith organ and 260 other cell types or tissues"/>
</dbReference>
<dbReference type="GO" id="GO:0016020">
    <property type="term" value="C:membrane"/>
    <property type="evidence" value="ECO:0007669"/>
    <property type="project" value="UniProtKB-SubCell"/>
</dbReference>
<dbReference type="GO" id="GO:0046872">
    <property type="term" value="F:metal ion binding"/>
    <property type="evidence" value="ECO:0007669"/>
    <property type="project" value="UniProtKB-KW"/>
</dbReference>
<dbReference type="GO" id="GO:0004722">
    <property type="term" value="F:protein serine/threonine phosphatase activity"/>
    <property type="evidence" value="ECO:0000314"/>
    <property type="project" value="MGI"/>
</dbReference>
<dbReference type="GO" id="GO:0007178">
    <property type="term" value="P:cell surface receptor protein serine/threonine kinase signaling pathway"/>
    <property type="evidence" value="ECO:0000314"/>
    <property type="project" value="MGI"/>
</dbReference>
<dbReference type="GO" id="GO:0000165">
    <property type="term" value="P:MAPK cascade"/>
    <property type="evidence" value="ECO:0000353"/>
    <property type="project" value="MGI"/>
</dbReference>
<dbReference type="CDD" id="cd00143">
    <property type="entry name" value="PP2Cc"/>
    <property type="match status" value="1"/>
</dbReference>
<dbReference type="FunFam" id="3.60.40.10:FF:000017">
    <property type="entry name" value="phosphatase 1L isoform X1"/>
    <property type="match status" value="1"/>
</dbReference>
<dbReference type="Gene3D" id="3.60.40.10">
    <property type="entry name" value="PPM-type phosphatase domain"/>
    <property type="match status" value="1"/>
</dbReference>
<dbReference type="InterPro" id="IPR015655">
    <property type="entry name" value="PP2C"/>
</dbReference>
<dbReference type="InterPro" id="IPR000222">
    <property type="entry name" value="PP2C_BS"/>
</dbReference>
<dbReference type="InterPro" id="IPR036457">
    <property type="entry name" value="PPM-type-like_dom_sf"/>
</dbReference>
<dbReference type="InterPro" id="IPR001932">
    <property type="entry name" value="PPM-type_phosphatase-like_dom"/>
</dbReference>
<dbReference type="PANTHER" id="PTHR47992">
    <property type="entry name" value="PROTEIN PHOSPHATASE"/>
    <property type="match status" value="1"/>
</dbReference>
<dbReference type="Pfam" id="PF00481">
    <property type="entry name" value="PP2C"/>
    <property type="match status" value="1"/>
</dbReference>
<dbReference type="SMART" id="SM00331">
    <property type="entry name" value="PP2C_SIG"/>
    <property type="match status" value="1"/>
</dbReference>
<dbReference type="SMART" id="SM00332">
    <property type="entry name" value="PP2Cc"/>
    <property type="match status" value="1"/>
</dbReference>
<dbReference type="SUPFAM" id="SSF81606">
    <property type="entry name" value="PP2C-like"/>
    <property type="match status" value="1"/>
</dbReference>
<dbReference type="PROSITE" id="PS01032">
    <property type="entry name" value="PPM_1"/>
    <property type="match status" value="1"/>
</dbReference>
<dbReference type="PROSITE" id="PS51746">
    <property type="entry name" value="PPM_2"/>
    <property type="match status" value="1"/>
</dbReference>
<name>PPM1L_MOUSE</name>
<accession>Q8BHN0</accession>
<accession>Q3UGL2</accession>
<accession>Q810H0</accession>
<accession>Q8C021</accession>
<accession>Q8C1D5</accession>
<accession>Q9Z0T1</accession>
<proteinExistence type="evidence at protein level"/>
<gene>
    <name type="primary">Ppm1l</name>
    <name type="synonym">Kiaa4175</name>
</gene>
<reference key="1">
    <citation type="journal article" date="2003" name="J. Biol. Chem.">
        <title>Regulation of the interleukin-1-induced signaling pathways by a novel member of the protein phosphatase 2C family (PP2Cepsilon).</title>
        <authorList>
            <person name="Li M.G."/>
            <person name="Katsura K."/>
            <person name="Nomiyama H."/>
            <person name="Komaki K."/>
            <person name="Ninomiya-Tsuji J."/>
            <person name="Matsumoto K."/>
            <person name="Kobayashi T."/>
            <person name="Tamura S."/>
        </authorList>
    </citation>
    <scope>NUCLEOTIDE SEQUENCE [MRNA] (ISOFORM 1)</scope>
    <scope>FUNCTION</scope>
    <scope>INTERACTION WITH MAP3K7</scope>
    <scope>MUTAGENESIS OF HIS-130; ARG-239; ARG-241; ARG-265 AND ASP-302</scope>
    <scope>TISSUE SPECIFICITY</scope>
</reference>
<reference key="2">
    <citation type="journal article" date="2005" name="Science">
        <title>The transcriptional landscape of the mammalian genome.</title>
        <authorList>
            <person name="Carninci P."/>
            <person name="Kasukawa T."/>
            <person name="Katayama S."/>
            <person name="Gough J."/>
            <person name="Frith M.C."/>
            <person name="Maeda N."/>
            <person name="Oyama R."/>
            <person name="Ravasi T."/>
            <person name="Lenhard B."/>
            <person name="Wells C."/>
            <person name="Kodzius R."/>
            <person name="Shimokawa K."/>
            <person name="Bajic V.B."/>
            <person name="Brenner S.E."/>
            <person name="Batalov S."/>
            <person name="Forrest A.R."/>
            <person name="Zavolan M."/>
            <person name="Davis M.J."/>
            <person name="Wilming L.G."/>
            <person name="Aidinis V."/>
            <person name="Allen J.E."/>
            <person name="Ambesi-Impiombato A."/>
            <person name="Apweiler R."/>
            <person name="Aturaliya R.N."/>
            <person name="Bailey T.L."/>
            <person name="Bansal M."/>
            <person name="Baxter L."/>
            <person name="Beisel K.W."/>
            <person name="Bersano T."/>
            <person name="Bono H."/>
            <person name="Chalk A.M."/>
            <person name="Chiu K.P."/>
            <person name="Choudhary V."/>
            <person name="Christoffels A."/>
            <person name="Clutterbuck D.R."/>
            <person name="Crowe M.L."/>
            <person name="Dalla E."/>
            <person name="Dalrymple B.P."/>
            <person name="de Bono B."/>
            <person name="Della Gatta G."/>
            <person name="di Bernardo D."/>
            <person name="Down T."/>
            <person name="Engstrom P."/>
            <person name="Fagiolini M."/>
            <person name="Faulkner G."/>
            <person name="Fletcher C.F."/>
            <person name="Fukushima T."/>
            <person name="Furuno M."/>
            <person name="Futaki S."/>
            <person name="Gariboldi M."/>
            <person name="Georgii-Hemming P."/>
            <person name="Gingeras T.R."/>
            <person name="Gojobori T."/>
            <person name="Green R.E."/>
            <person name="Gustincich S."/>
            <person name="Harbers M."/>
            <person name="Hayashi Y."/>
            <person name="Hensch T.K."/>
            <person name="Hirokawa N."/>
            <person name="Hill D."/>
            <person name="Huminiecki L."/>
            <person name="Iacono M."/>
            <person name="Ikeo K."/>
            <person name="Iwama A."/>
            <person name="Ishikawa T."/>
            <person name="Jakt M."/>
            <person name="Kanapin A."/>
            <person name="Katoh M."/>
            <person name="Kawasawa Y."/>
            <person name="Kelso J."/>
            <person name="Kitamura H."/>
            <person name="Kitano H."/>
            <person name="Kollias G."/>
            <person name="Krishnan S.P."/>
            <person name="Kruger A."/>
            <person name="Kummerfeld S.K."/>
            <person name="Kurochkin I.V."/>
            <person name="Lareau L.F."/>
            <person name="Lazarevic D."/>
            <person name="Lipovich L."/>
            <person name="Liu J."/>
            <person name="Liuni S."/>
            <person name="McWilliam S."/>
            <person name="Madan Babu M."/>
            <person name="Madera M."/>
            <person name="Marchionni L."/>
            <person name="Matsuda H."/>
            <person name="Matsuzawa S."/>
            <person name="Miki H."/>
            <person name="Mignone F."/>
            <person name="Miyake S."/>
            <person name="Morris K."/>
            <person name="Mottagui-Tabar S."/>
            <person name="Mulder N."/>
            <person name="Nakano N."/>
            <person name="Nakauchi H."/>
            <person name="Ng P."/>
            <person name="Nilsson R."/>
            <person name="Nishiguchi S."/>
            <person name="Nishikawa S."/>
            <person name="Nori F."/>
            <person name="Ohara O."/>
            <person name="Okazaki Y."/>
            <person name="Orlando V."/>
            <person name="Pang K.C."/>
            <person name="Pavan W.J."/>
            <person name="Pavesi G."/>
            <person name="Pesole G."/>
            <person name="Petrovsky N."/>
            <person name="Piazza S."/>
            <person name="Reed J."/>
            <person name="Reid J.F."/>
            <person name="Ring B.Z."/>
            <person name="Ringwald M."/>
            <person name="Rost B."/>
            <person name="Ruan Y."/>
            <person name="Salzberg S.L."/>
            <person name="Sandelin A."/>
            <person name="Schneider C."/>
            <person name="Schoenbach C."/>
            <person name="Sekiguchi K."/>
            <person name="Semple C.A."/>
            <person name="Seno S."/>
            <person name="Sessa L."/>
            <person name="Sheng Y."/>
            <person name="Shibata Y."/>
            <person name="Shimada H."/>
            <person name="Shimada K."/>
            <person name="Silva D."/>
            <person name="Sinclair B."/>
            <person name="Sperling S."/>
            <person name="Stupka E."/>
            <person name="Sugiura K."/>
            <person name="Sultana R."/>
            <person name="Takenaka Y."/>
            <person name="Taki K."/>
            <person name="Tammoja K."/>
            <person name="Tan S.L."/>
            <person name="Tang S."/>
            <person name="Taylor M.S."/>
            <person name="Tegner J."/>
            <person name="Teichmann S.A."/>
            <person name="Ueda H.R."/>
            <person name="van Nimwegen E."/>
            <person name="Verardo R."/>
            <person name="Wei C.L."/>
            <person name="Yagi K."/>
            <person name="Yamanishi H."/>
            <person name="Zabarovsky E."/>
            <person name="Zhu S."/>
            <person name="Zimmer A."/>
            <person name="Hide W."/>
            <person name="Bult C."/>
            <person name="Grimmond S.M."/>
            <person name="Teasdale R.D."/>
            <person name="Liu E.T."/>
            <person name="Brusic V."/>
            <person name="Quackenbush J."/>
            <person name="Wahlestedt C."/>
            <person name="Mattick J.S."/>
            <person name="Hume D.A."/>
            <person name="Kai C."/>
            <person name="Sasaki D."/>
            <person name="Tomaru Y."/>
            <person name="Fukuda S."/>
            <person name="Kanamori-Katayama M."/>
            <person name="Suzuki M."/>
            <person name="Aoki J."/>
            <person name="Arakawa T."/>
            <person name="Iida J."/>
            <person name="Imamura K."/>
            <person name="Itoh M."/>
            <person name="Kato T."/>
            <person name="Kawaji H."/>
            <person name="Kawagashira N."/>
            <person name="Kawashima T."/>
            <person name="Kojima M."/>
            <person name="Kondo S."/>
            <person name="Konno H."/>
            <person name="Nakano K."/>
            <person name="Ninomiya N."/>
            <person name="Nishio T."/>
            <person name="Okada M."/>
            <person name="Plessy C."/>
            <person name="Shibata K."/>
            <person name="Shiraki T."/>
            <person name="Suzuki S."/>
            <person name="Tagami M."/>
            <person name="Waki K."/>
            <person name="Watahiki A."/>
            <person name="Okamura-Oho Y."/>
            <person name="Suzuki H."/>
            <person name="Kawai J."/>
            <person name="Hayashizaki Y."/>
        </authorList>
    </citation>
    <scope>NUCLEOTIDE SEQUENCE [LARGE SCALE MRNA] (ISOFORMS 1 AND 2)</scope>
    <source>
        <strain>C57BL/6J</strain>
        <tissue>Cerebellum</tissue>
        <tissue>Corpora quadrigemina</tissue>
        <tissue>Embryonic head</tissue>
        <tissue>Melanocyte</tissue>
        <tissue>Olfactory bulb</tissue>
    </source>
</reference>
<reference key="3">
    <citation type="submission" date="2005-02" db="EMBL/GenBank/DDBJ databases">
        <title>Prediction of the coding sequences of mouse homologues of KIAA gene. The complete nucleotide sequences of mouse KIAA-homologous cDNAs identified by screening of terminal sequences of cDNA clones randomly sampled from size-fractionated libraries.</title>
        <authorList>
            <person name="Okazaki N."/>
            <person name="Kikuno R.F."/>
            <person name="Ohara R."/>
            <person name="Inamoto S."/>
            <person name="Nagase T."/>
            <person name="Ohara O."/>
            <person name="Koga H."/>
        </authorList>
    </citation>
    <scope>NUCLEOTIDE SEQUENCE [LARGE SCALE MRNA] (ISOFORM 1)</scope>
    <source>
        <tissue>Fetal brain</tissue>
    </source>
</reference>
<reference key="4">
    <citation type="journal article" date="2004" name="Genome Res.">
        <title>The status, quality, and expansion of the NIH full-length cDNA project: the Mammalian Gene Collection (MGC).</title>
        <authorList>
            <consortium name="The MGC Project Team"/>
        </authorList>
    </citation>
    <scope>NUCLEOTIDE SEQUENCE [LARGE SCALE MRNA] (ISOFORM 1)</scope>
    <source>
        <strain>C57BL/6J</strain>
        <tissue>Embryonic brain</tissue>
    </source>
</reference>
<reference key="5">
    <citation type="submission" date="1999-01" db="EMBL/GenBank/DDBJ databases">
        <title>Isolation of PP2C sequences using degenerate-oligo PCR.</title>
        <authorList>
            <person name="Stothard P.M."/>
            <person name="Pilgrim D."/>
        </authorList>
    </citation>
    <scope>NUCLEOTIDE SEQUENCE [MRNA] OF 133-299 (ISOFORMS 1/2)</scope>
    <source>
        <tissue>Lung</tissue>
    </source>
</reference>
<reference key="6">
    <citation type="journal article" date="2007" name="Biochem. J.">
        <title>Regulation of apoptosis signal-regulating kinase 1 by protein phosphatase 2Cepsilon.</title>
        <authorList>
            <person name="Saito J."/>
            <person name="Toriumi S."/>
            <person name="Awano K."/>
            <person name="Ichijo H."/>
            <person name="Sasaki K."/>
            <person name="Kobayashi T."/>
            <person name="Tamura S."/>
        </authorList>
    </citation>
    <scope>INTERACTION WITH MAP3K5</scope>
</reference>
<reference key="7">
    <citation type="journal article" date="2008" name="Nature">
        <title>Variations in DNA elucidate molecular networks that cause disease.</title>
        <authorList>
            <person name="Chen Y."/>
            <person name="Zhu J."/>
            <person name="Lum P.Y."/>
            <person name="Yang X."/>
            <person name="Pinto S."/>
            <person name="MacNeil D.J."/>
            <person name="Zhang C."/>
            <person name="Lamb J."/>
            <person name="Edwards S."/>
            <person name="Sieberts S.K."/>
            <person name="Leonardson A."/>
            <person name="Castellini L.W."/>
            <person name="Wang S."/>
            <person name="Champy M.-F."/>
            <person name="Zhang B."/>
            <person name="Emilsson V."/>
            <person name="Doss S."/>
            <person name="Ghazalpour A."/>
            <person name="Horvath S."/>
            <person name="Drake T.A."/>
            <person name="Lusis A.J."/>
            <person name="Schadt E.E."/>
        </authorList>
    </citation>
    <scope>DISRUPTION PHENOTYPE</scope>
</reference>
<reference key="8">
    <citation type="journal article" date="2010" name="Cell">
        <title>A tissue-specific atlas of mouse protein phosphorylation and expression.</title>
        <authorList>
            <person name="Huttlin E.L."/>
            <person name="Jedrychowski M.P."/>
            <person name="Elias J.E."/>
            <person name="Goswami T."/>
            <person name="Rad R."/>
            <person name="Beausoleil S.A."/>
            <person name="Villen J."/>
            <person name="Haas W."/>
            <person name="Sowa M.E."/>
            <person name="Gygi S.P."/>
        </authorList>
    </citation>
    <scope>IDENTIFICATION BY MASS SPECTROMETRY [LARGE SCALE ANALYSIS]</scope>
    <source>
        <tissue>Brain</tissue>
    </source>
</reference>
<comment type="function">
    <text evidence="4">Acts as a suppressor of the SAPK signaling pathways by associating with and dephosphorylating MAP3K7/TAK1 and MAP3K5, and by attenuating the association between MAP3K7/TAK1 and MAP2K4 or MAP2K6.</text>
</comment>
<comment type="catalytic activity">
    <reaction>
        <text>O-phospho-L-seryl-[protein] + H2O = L-seryl-[protein] + phosphate</text>
        <dbReference type="Rhea" id="RHEA:20629"/>
        <dbReference type="Rhea" id="RHEA-COMP:9863"/>
        <dbReference type="Rhea" id="RHEA-COMP:11604"/>
        <dbReference type="ChEBI" id="CHEBI:15377"/>
        <dbReference type="ChEBI" id="CHEBI:29999"/>
        <dbReference type="ChEBI" id="CHEBI:43474"/>
        <dbReference type="ChEBI" id="CHEBI:83421"/>
        <dbReference type="EC" id="3.1.3.16"/>
    </reaction>
</comment>
<comment type="catalytic activity">
    <reaction>
        <text>O-phospho-L-threonyl-[protein] + H2O = L-threonyl-[protein] + phosphate</text>
        <dbReference type="Rhea" id="RHEA:47004"/>
        <dbReference type="Rhea" id="RHEA-COMP:11060"/>
        <dbReference type="Rhea" id="RHEA-COMP:11605"/>
        <dbReference type="ChEBI" id="CHEBI:15377"/>
        <dbReference type="ChEBI" id="CHEBI:30013"/>
        <dbReference type="ChEBI" id="CHEBI:43474"/>
        <dbReference type="ChEBI" id="CHEBI:61977"/>
        <dbReference type="EC" id="3.1.3.16"/>
    </reaction>
</comment>
<comment type="cofactor">
    <cofactor evidence="1">
        <name>Mg(2+)</name>
        <dbReference type="ChEBI" id="CHEBI:18420"/>
    </cofactor>
    <cofactor evidence="1">
        <name>Mn(2+)</name>
        <dbReference type="ChEBI" id="CHEBI:29035"/>
    </cofactor>
    <text evidence="1">Binds 2 magnesium or manganese ions per subunit.</text>
</comment>
<comment type="subunit">
    <text evidence="4 5">Interacts with MAP3K7/TAK1 and MAP3K5.</text>
</comment>
<comment type="interaction">
    <interactant intactId="EBI-7970002">
        <id>Q8BHN0</id>
    </interactant>
    <interactant intactId="EBI-1791792">
        <id>Q9H3P7</id>
        <label>ACBD3</label>
    </interactant>
    <organismsDiffer>true</organismsDiffer>
    <experiments>3</experiments>
</comment>
<comment type="interaction">
    <interactant intactId="EBI-7970002">
        <id>Q8BHN0</id>
    </interactant>
    <interactant intactId="EBI-707595">
        <id>P27448</id>
        <label>MARK3</label>
    </interactant>
    <organismsDiffer>true</organismsDiffer>
    <experiments>3</experiments>
</comment>
<comment type="subcellular location">
    <subcellularLocation>
        <location evidence="8">Membrane</location>
        <topology evidence="8">Single-pass type I membrane protein</topology>
    </subcellularLocation>
</comment>
<comment type="alternative products">
    <event type="alternative splicing"/>
    <isoform>
        <id>Q8BHN0-1</id>
        <name>1</name>
        <sequence type="displayed"/>
    </isoform>
    <isoform>
        <id>Q8BHN0-2</id>
        <name>2</name>
        <sequence type="described" ref="VSP_016928 VSP_016929"/>
    </isoform>
</comment>
<comment type="tissue specificity">
    <text evidence="4">Expressed in brain, heart, testis, liver, lung and skeletal muscle.</text>
</comment>
<comment type="disruption phenotype">
    <text evidence="6">Mice exhibit increased fat mass and higher plasma glucose levels compared to wild type mice. Male mice also exhibit a decrease in free fatty acids and higher blood pressure.</text>
</comment>
<comment type="similarity">
    <text evidence="8">Belongs to the PP2C family.</text>
</comment>
<comment type="sequence caution" evidence="8">
    <conflict type="erroneous initiation">
        <sequence resource="EMBL-CDS" id="AAO43055"/>
    </conflict>
</comment>